<keyword id="KW-0050">Antiport</keyword>
<keyword id="KW-1003">Cell membrane</keyword>
<keyword id="KW-0966">Cell projection</keyword>
<keyword id="KW-0969">Cilium</keyword>
<keyword id="KW-0278">Fertilization</keyword>
<keyword id="KW-0282">Flagellum</keyword>
<keyword id="KW-0406">Ion transport</keyword>
<keyword id="KW-0472">Membrane</keyword>
<keyword id="KW-1185">Reference proteome</keyword>
<keyword id="KW-0915">Sodium</keyword>
<keyword id="KW-0739">Sodium transport</keyword>
<keyword id="KW-0812">Transmembrane</keyword>
<keyword id="KW-1133">Transmembrane helix</keyword>
<keyword id="KW-0813">Transport</keyword>
<reference key="1">
    <citation type="journal article" date="2002" name="BMC Genomics">
        <title>Cynomolgus monkey testicular cDNAs for discovery of novel human genes in the human genome sequence.</title>
        <authorList>
            <person name="Osada N."/>
            <person name="Hida M."/>
            <person name="Kusuda J."/>
            <person name="Tanuma R."/>
            <person name="Hirata M."/>
            <person name="Suto Y."/>
            <person name="Hirai M."/>
            <person name="Terao K."/>
            <person name="Sugano S."/>
            <person name="Hashimoto K."/>
        </authorList>
    </citation>
    <scope>NUCLEOTIDE SEQUENCE [LARGE SCALE MRNA]</scope>
    <source>
        <tissue>Testis</tissue>
    </source>
</reference>
<reference key="2">
    <citation type="submission" date="2005-06" db="EMBL/GenBank/DDBJ databases">
        <title>DNA sequences of macaque genes expressed in brain or testis and its evolutionary implications.</title>
        <authorList>
            <consortium name="International consortium for macaque cDNA sequencing and analysis"/>
        </authorList>
    </citation>
    <scope>NUCLEOTIDE SEQUENCE [LARGE SCALE MRNA]</scope>
    <source>
        <tissue>Testis</tissue>
    </source>
</reference>
<feature type="chain" id="PRO_0000314008" description="Sodium/hydrogen exchanger 9B1">
    <location>
        <begin position="1"/>
        <end position="511"/>
    </location>
</feature>
<feature type="transmembrane region" description="Helical" evidence="2">
    <location>
        <begin position="67"/>
        <end position="87"/>
    </location>
</feature>
<feature type="transmembrane region" description="Helical" evidence="2">
    <location>
        <begin position="95"/>
        <end position="115"/>
    </location>
</feature>
<feature type="transmembrane region" description="Helical" evidence="2">
    <location>
        <begin position="116"/>
        <end position="136"/>
    </location>
</feature>
<feature type="transmembrane region" description="Helical" evidence="2">
    <location>
        <begin position="152"/>
        <end position="172"/>
    </location>
</feature>
<feature type="transmembrane region" description="Helical" evidence="2">
    <location>
        <begin position="187"/>
        <end position="207"/>
    </location>
</feature>
<feature type="transmembrane region" description="Helical" evidence="2">
    <location>
        <begin position="215"/>
        <end position="235"/>
    </location>
</feature>
<feature type="transmembrane region" description="Helical" evidence="2">
    <location>
        <begin position="260"/>
        <end position="280"/>
    </location>
</feature>
<feature type="transmembrane region" description="Helical" evidence="2">
    <location>
        <begin position="284"/>
        <end position="304"/>
    </location>
</feature>
<feature type="transmembrane region" description="Helical" evidence="2">
    <location>
        <begin position="337"/>
        <end position="357"/>
    </location>
</feature>
<feature type="transmembrane region" description="Helical" evidence="2">
    <location>
        <begin position="368"/>
        <end position="388"/>
    </location>
</feature>
<feature type="transmembrane region" description="Helical" evidence="2">
    <location>
        <begin position="398"/>
        <end position="418"/>
    </location>
</feature>
<feature type="transmembrane region" description="Helical" evidence="2">
    <location>
        <begin position="431"/>
        <end position="451"/>
    </location>
</feature>
<feature type="transmembrane region" description="Helical" evidence="2">
    <location>
        <begin position="472"/>
        <end position="492"/>
    </location>
</feature>
<feature type="region of interest" description="Disordered" evidence="3">
    <location>
        <begin position="1"/>
        <end position="41"/>
    </location>
</feature>
<feature type="compositionally biased region" description="Basic and acidic residues" evidence="3">
    <location>
        <begin position="1"/>
        <end position="10"/>
    </location>
</feature>
<feature type="compositionally biased region" description="Polar residues" evidence="3">
    <location>
        <begin position="16"/>
        <end position="31"/>
    </location>
</feature>
<feature type="sequence conflict" description="In Ref. 1; BAB63050." evidence="4" ref="1">
    <original>K</original>
    <variation>R</variation>
    <location>
        <position position="53"/>
    </location>
</feature>
<feature type="sequence conflict" description="In Ref. 1; BAB63050." evidence="4" ref="1">
    <original>C</original>
    <variation>Y</variation>
    <location>
        <position position="103"/>
    </location>
</feature>
<feature type="sequence conflict" description="In Ref. 1; BAB63050." evidence="4" ref="1">
    <original>S</original>
    <variation>P</variation>
    <location>
        <position position="286"/>
    </location>
</feature>
<feature type="sequence conflict" description="In Ref. 1; BAB63050." evidence="4" ref="1">
    <original>E</original>
    <variation>K</variation>
    <location>
        <position position="318"/>
    </location>
</feature>
<organism>
    <name type="scientific">Macaca fascicularis</name>
    <name type="common">Crab-eating macaque</name>
    <name type="synonym">Cynomolgus monkey</name>
    <dbReference type="NCBI Taxonomy" id="9541"/>
    <lineage>
        <taxon>Eukaryota</taxon>
        <taxon>Metazoa</taxon>
        <taxon>Chordata</taxon>
        <taxon>Craniata</taxon>
        <taxon>Vertebrata</taxon>
        <taxon>Euteleostomi</taxon>
        <taxon>Mammalia</taxon>
        <taxon>Eutheria</taxon>
        <taxon>Euarchontoglires</taxon>
        <taxon>Primates</taxon>
        <taxon>Haplorrhini</taxon>
        <taxon>Catarrhini</taxon>
        <taxon>Cercopithecidae</taxon>
        <taxon>Cercopithecinae</taxon>
        <taxon>Macaca</taxon>
    </lineage>
</organism>
<name>SL9B1_MACFA</name>
<accession>Q4R7S2</accession>
<accession>Q95JS4</accession>
<dbReference type="EMBL" id="AB070105">
    <property type="protein sequence ID" value="BAB63050.1"/>
    <property type="molecule type" value="mRNA"/>
</dbReference>
<dbReference type="EMBL" id="AB168740">
    <property type="protein sequence ID" value="BAE00850.1"/>
    <property type="status" value="ALT_INIT"/>
    <property type="molecule type" value="mRNA"/>
</dbReference>
<dbReference type="RefSeq" id="NP_001306523.1">
    <property type="nucleotide sequence ID" value="NM_001319594.1"/>
</dbReference>
<dbReference type="SMR" id="Q4R7S2"/>
<dbReference type="STRING" id="9541.ENSMFAP00000031011"/>
<dbReference type="eggNOG" id="KOG3826">
    <property type="taxonomic scope" value="Eukaryota"/>
</dbReference>
<dbReference type="Proteomes" id="UP000233100">
    <property type="component" value="Unplaced"/>
</dbReference>
<dbReference type="GO" id="GO:0005886">
    <property type="term" value="C:plasma membrane"/>
    <property type="evidence" value="ECO:0007669"/>
    <property type="project" value="UniProtKB-KW"/>
</dbReference>
<dbReference type="GO" id="GO:0097228">
    <property type="term" value="C:sperm principal piece"/>
    <property type="evidence" value="ECO:0000250"/>
    <property type="project" value="UniProtKB"/>
</dbReference>
<dbReference type="GO" id="GO:0015297">
    <property type="term" value="F:antiporter activity"/>
    <property type="evidence" value="ECO:0007669"/>
    <property type="project" value="UniProtKB-KW"/>
</dbReference>
<dbReference type="GO" id="GO:0030317">
    <property type="term" value="P:flagellated sperm motility"/>
    <property type="evidence" value="ECO:0000250"/>
    <property type="project" value="UniProtKB"/>
</dbReference>
<dbReference type="GO" id="GO:1902600">
    <property type="term" value="P:proton transmembrane transport"/>
    <property type="evidence" value="ECO:0007669"/>
    <property type="project" value="InterPro"/>
</dbReference>
<dbReference type="GO" id="GO:0051453">
    <property type="term" value="P:regulation of intracellular pH"/>
    <property type="evidence" value="ECO:0000250"/>
    <property type="project" value="UniProtKB"/>
</dbReference>
<dbReference type="GO" id="GO:0007338">
    <property type="term" value="P:single fertilization"/>
    <property type="evidence" value="ECO:0007669"/>
    <property type="project" value="UniProtKB-KW"/>
</dbReference>
<dbReference type="GO" id="GO:0006814">
    <property type="term" value="P:sodium ion transport"/>
    <property type="evidence" value="ECO:0007669"/>
    <property type="project" value="UniProtKB-KW"/>
</dbReference>
<dbReference type="FunFam" id="1.20.1530.20:FF:000012">
    <property type="entry name" value="sodium/hydrogen exchanger 9B2 isoform X1"/>
    <property type="match status" value="1"/>
</dbReference>
<dbReference type="Gene3D" id="1.20.1530.20">
    <property type="match status" value="1"/>
</dbReference>
<dbReference type="InterPro" id="IPR006153">
    <property type="entry name" value="Cation/H_exchanger_TM"/>
</dbReference>
<dbReference type="InterPro" id="IPR051843">
    <property type="entry name" value="CPA1_transporter"/>
</dbReference>
<dbReference type="InterPro" id="IPR038770">
    <property type="entry name" value="Na+/solute_symporter_sf"/>
</dbReference>
<dbReference type="PANTHER" id="PTHR31102">
    <property type="match status" value="1"/>
</dbReference>
<dbReference type="PANTHER" id="PTHR31102:SF5">
    <property type="entry name" value="SLC9B1-LIKE PROTEIN SLC9B1P1-RELATED"/>
    <property type="match status" value="1"/>
</dbReference>
<dbReference type="Pfam" id="PF00999">
    <property type="entry name" value="Na_H_Exchanger"/>
    <property type="match status" value="1"/>
</dbReference>
<proteinExistence type="evidence at transcript level"/>
<protein>
    <recommendedName>
        <fullName>Sodium/hydrogen exchanger 9B1</fullName>
    </recommendedName>
    <alternativeName>
        <fullName>Na(+)/H(+) exchanger-like domain-containing protein 1</fullName>
        <shortName>NHE domain-containing protein 1</shortName>
    </alternativeName>
    <alternativeName>
        <fullName>Sodium/hydrogen exchanger-like domain-containing protein 1</fullName>
    </alternativeName>
    <alternativeName>
        <fullName>Solute carrier family 9 subfamily B member 1</fullName>
    </alternativeName>
</protein>
<sequence length="511" mass="55445">MHTTESKDEHLEDENFQTSTTPQSLIDPNSTAHEETKTVISDTEEIKPQTKKKTYISCPLRGALNRIITNGVILFVIWCTTWSVLGSEALPGGNLFGLLIIFCSAIIGGKILQLIRIPLVPPLPPLLGMLLAGFTIRNVPFISKHVHVHNTWSSILRSTALTVILIRAGLGLDPQALRHLKVVCFRLAVGPCLMEASAAAVFSHFIMKFPWEWAFLLGFVLGAVSPAIVVPSMMVLQENGYGVEEGIPSLLMAASSMDDVLAITGFNTCLSIVFSSGGIVNNAIASIKSVSISLLAGIVLGFFVRYFPSEDQKKLALERGFLILTMCVSAVLGSQRIGLHGTGGLFTLVLSFIAGTKWSQEKMKVQKIITNVWDIFQPLLFGLVGAEVSVSLLESNTIGIFVATLSLALCVRILVTYILMCFAGFSFKEKIFIALAWMPKATVQAVLGPLVLETARVSAPHLEPYSKDVMTVAFLAILITAPNGALLMGILGPKLLRRHYDPSKIKLQLST</sequence>
<gene>
    <name type="primary">SLC9B1</name>
    <name type="synonym">NHA1</name>
    <name type="synonym">NHEDC1</name>
    <name type="ORF">QtsA-13925</name>
    <name type="ORF">QtsA-14489</name>
</gene>
<evidence type="ECO:0000250" key="1">
    <source>
        <dbReference type="UniProtKB" id="Q8C0X2"/>
    </source>
</evidence>
<evidence type="ECO:0000255" key="2"/>
<evidence type="ECO:0000256" key="3">
    <source>
        <dbReference type="SAM" id="MobiDB-lite"/>
    </source>
</evidence>
<evidence type="ECO:0000305" key="4"/>
<comment type="function">
    <text evidence="1">Sperm-specific Na(+)/H(+) exchanger involved in intracellular pH regulation of spermatozoa. Involved in sperm motility and fertility.</text>
</comment>
<comment type="subcellular location">
    <subcellularLocation>
        <location evidence="1">Cell projection</location>
        <location evidence="1">Cilium</location>
        <location evidence="1">Flagellum membrane</location>
        <topology evidence="2">Multi-pass membrane protein</topology>
    </subcellularLocation>
</comment>
<comment type="similarity">
    <text evidence="4">Belongs to the monovalent cation:proton antiporter 1 (CPA1) transporter (TC 2.A.36) family.</text>
</comment>
<comment type="sequence caution" evidence="4">
    <conflict type="erroneous initiation">
        <sequence resource="EMBL-CDS" id="BAE00850"/>
    </conflict>
    <text>Extended N-terminus.</text>
</comment>